<gene>
    <name evidence="1" type="primary">hemC</name>
    <name type="ordered locus">MA_0582</name>
</gene>
<proteinExistence type="inferred from homology"/>
<sequence>MIIGTRGSQLALAQTENVARLLKERGVETSIKIIKTSGDRFTDRPLHAVSGGVGAFVRELDDVMLAGEIDIAVHSMKDMPTIRPEGLPTVAVLKRDTPFDILLTYDGTTLDELPEQAIIGTSSLRRTAQIRRYRPDLITQELRGNIDTRLRKLKEGQYDGILLAKAGLERMGWEIDGEILSPDFFCPSPNQGTVAVVTRADPEIEAAVSGLDHTESRIVTEIERILISELGGGCTTPIGSYAELTSDKQEIHIRAEVLSLDGKEDVRIDEFIPMLGGLEKARELGHRLVEMGGKRLAEEALLQISRNACGTENSFDY</sequence>
<reference key="1">
    <citation type="journal article" date="2002" name="Genome Res.">
        <title>The genome of Methanosarcina acetivorans reveals extensive metabolic and physiological diversity.</title>
        <authorList>
            <person name="Galagan J.E."/>
            <person name="Nusbaum C."/>
            <person name="Roy A."/>
            <person name="Endrizzi M.G."/>
            <person name="Macdonald P."/>
            <person name="FitzHugh W."/>
            <person name="Calvo S."/>
            <person name="Engels R."/>
            <person name="Smirnov S."/>
            <person name="Atnoor D."/>
            <person name="Brown A."/>
            <person name="Allen N."/>
            <person name="Naylor J."/>
            <person name="Stange-Thomann N."/>
            <person name="DeArellano K."/>
            <person name="Johnson R."/>
            <person name="Linton L."/>
            <person name="McEwan P."/>
            <person name="McKernan K."/>
            <person name="Talamas J."/>
            <person name="Tirrell A."/>
            <person name="Ye W."/>
            <person name="Zimmer A."/>
            <person name="Barber R.D."/>
            <person name="Cann I."/>
            <person name="Graham D.E."/>
            <person name="Grahame D.A."/>
            <person name="Guss A.M."/>
            <person name="Hedderich R."/>
            <person name="Ingram-Smith C."/>
            <person name="Kuettner H.C."/>
            <person name="Krzycki J.A."/>
            <person name="Leigh J.A."/>
            <person name="Li W."/>
            <person name="Liu J."/>
            <person name="Mukhopadhyay B."/>
            <person name="Reeve J.N."/>
            <person name="Smith K."/>
            <person name="Springer T.A."/>
            <person name="Umayam L.A."/>
            <person name="White O."/>
            <person name="White R.H."/>
            <person name="de Macario E.C."/>
            <person name="Ferry J.G."/>
            <person name="Jarrell K.F."/>
            <person name="Jing H."/>
            <person name="Macario A.J.L."/>
            <person name="Paulsen I.T."/>
            <person name="Pritchett M."/>
            <person name="Sowers K.R."/>
            <person name="Swanson R.V."/>
            <person name="Zinder S.H."/>
            <person name="Lander E."/>
            <person name="Metcalf W.W."/>
            <person name="Birren B."/>
        </authorList>
    </citation>
    <scope>NUCLEOTIDE SEQUENCE [LARGE SCALE GENOMIC DNA]</scope>
    <source>
        <strain>ATCC 35395 / DSM 2834 / JCM 12185 / C2A</strain>
    </source>
</reference>
<dbReference type="EC" id="2.5.1.61" evidence="1"/>
<dbReference type="EMBL" id="AE010299">
    <property type="protein sequence ID" value="AAM04026.1"/>
    <property type="molecule type" value="Genomic_DNA"/>
</dbReference>
<dbReference type="RefSeq" id="WP_011020631.1">
    <property type="nucleotide sequence ID" value="NC_003552.1"/>
</dbReference>
<dbReference type="SMR" id="Q8TT56"/>
<dbReference type="FunCoup" id="Q8TT56">
    <property type="interactions" value="239"/>
</dbReference>
<dbReference type="STRING" id="188937.MA_0582"/>
<dbReference type="EnsemblBacteria" id="AAM04026">
    <property type="protein sequence ID" value="AAM04026"/>
    <property type="gene ID" value="MA_0582"/>
</dbReference>
<dbReference type="GeneID" id="1472474"/>
<dbReference type="KEGG" id="mac:MA_0582"/>
<dbReference type="HOGENOM" id="CLU_019704_0_2_2"/>
<dbReference type="InParanoid" id="Q8TT56"/>
<dbReference type="OrthoDB" id="8042at2157"/>
<dbReference type="PhylomeDB" id="Q8TT56"/>
<dbReference type="UniPathway" id="UPA00251">
    <property type="reaction ID" value="UER00319"/>
</dbReference>
<dbReference type="Proteomes" id="UP000002487">
    <property type="component" value="Chromosome"/>
</dbReference>
<dbReference type="GO" id="GO:0005737">
    <property type="term" value="C:cytoplasm"/>
    <property type="evidence" value="ECO:0000318"/>
    <property type="project" value="GO_Central"/>
</dbReference>
<dbReference type="GO" id="GO:0004418">
    <property type="term" value="F:hydroxymethylbilane synthase activity"/>
    <property type="evidence" value="ECO:0000318"/>
    <property type="project" value="GO_Central"/>
</dbReference>
<dbReference type="GO" id="GO:0006783">
    <property type="term" value="P:heme biosynthetic process"/>
    <property type="evidence" value="ECO:0000318"/>
    <property type="project" value="GO_Central"/>
</dbReference>
<dbReference type="GO" id="GO:0006782">
    <property type="term" value="P:protoporphyrinogen IX biosynthetic process"/>
    <property type="evidence" value="ECO:0007669"/>
    <property type="project" value="UniProtKB-UniRule"/>
</dbReference>
<dbReference type="CDD" id="cd13644">
    <property type="entry name" value="PBP2_HemC_archaea"/>
    <property type="match status" value="1"/>
</dbReference>
<dbReference type="FunFam" id="3.40.190.10:FF:000005">
    <property type="entry name" value="Porphobilinogen deaminase"/>
    <property type="match status" value="1"/>
</dbReference>
<dbReference type="FunFam" id="3.30.160.40:FF:000014">
    <property type="entry name" value="Probable porphobilinogen deaminase"/>
    <property type="match status" value="1"/>
</dbReference>
<dbReference type="FunFam" id="3.40.190.10:FF:000086">
    <property type="entry name" value="Probable porphobilinogen deaminase"/>
    <property type="match status" value="1"/>
</dbReference>
<dbReference type="Gene3D" id="3.40.190.10">
    <property type="entry name" value="Periplasmic binding protein-like II"/>
    <property type="match status" value="2"/>
</dbReference>
<dbReference type="Gene3D" id="3.30.160.40">
    <property type="entry name" value="Porphobilinogen deaminase, C-terminal domain"/>
    <property type="match status" value="1"/>
</dbReference>
<dbReference type="HAMAP" id="MF_00260">
    <property type="entry name" value="Porphobil_deam"/>
    <property type="match status" value="1"/>
</dbReference>
<dbReference type="InterPro" id="IPR000860">
    <property type="entry name" value="HemC"/>
</dbReference>
<dbReference type="InterPro" id="IPR022419">
    <property type="entry name" value="Porphobilin_deaminase_cofac_BS"/>
</dbReference>
<dbReference type="InterPro" id="IPR022417">
    <property type="entry name" value="Porphobilin_deaminase_N"/>
</dbReference>
<dbReference type="InterPro" id="IPR022418">
    <property type="entry name" value="Porphobilinogen_deaminase_C"/>
</dbReference>
<dbReference type="InterPro" id="IPR036803">
    <property type="entry name" value="Porphobilinogen_deaminase_C_sf"/>
</dbReference>
<dbReference type="NCBIfam" id="TIGR00212">
    <property type="entry name" value="hemC"/>
    <property type="match status" value="1"/>
</dbReference>
<dbReference type="PANTHER" id="PTHR11557">
    <property type="entry name" value="PORPHOBILINOGEN DEAMINASE"/>
    <property type="match status" value="1"/>
</dbReference>
<dbReference type="PANTHER" id="PTHR11557:SF0">
    <property type="entry name" value="PORPHOBILINOGEN DEAMINASE"/>
    <property type="match status" value="1"/>
</dbReference>
<dbReference type="Pfam" id="PF01379">
    <property type="entry name" value="Porphobil_deam"/>
    <property type="match status" value="1"/>
</dbReference>
<dbReference type="Pfam" id="PF03900">
    <property type="entry name" value="Porphobil_deamC"/>
    <property type="match status" value="1"/>
</dbReference>
<dbReference type="PIRSF" id="PIRSF001438">
    <property type="entry name" value="4pyrrol_synth_OHMeBilane_synth"/>
    <property type="match status" value="1"/>
</dbReference>
<dbReference type="PRINTS" id="PR00151">
    <property type="entry name" value="PORPHBDMNASE"/>
</dbReference>
<dbReference type="SUPFAM" id="SSF53850">
    <property type="entry name" value="Periplasmic binding protein-like II"/>
    <property type="match status" value="1"/>
</dbReference>
<dbReference type="SUPFAM" id="SSF54782">
    <property type="entry name" value="Porphobilinogen deaminase (hydroxymethylbilane synthase), C-terminal domain"/>
    <property type="match status" value="1"/>
</dbReference>
<dbReference type="PROSITE" id="PS00533">
    <property type="entry name" value="PORPHOBILINOGEN_DEAM"/>
    <property type="match status" value="1"/>
</dbReference>
<protein>
    <recommendedName>
        <fullName evidence="1">Probable porphobilinogen deaminase</fullName>
        <shortName evidence="1">PBG</shortName>
        <ecNumber evidence="1">2.5.1.61</ecNumber>
    </recommendedName>
    <alternativeName>
        <fullName evidence="1">Hydroxymethylbilane synthase</fullName>
        <shortName evidence="1">HMBS</shortName>
    </alternativeName>
    <alternativeName>
        <fullName evidence="1">Pre-uroporphyrinogen synthase</fullName>
    </alternativeName>
</protein>
<comment type="function">
    <text evidence="1">Tetrapolymerization of the monopyrrole PBG into the hydroxymethylbilane pre-uroporphyrinogen in several discrete steps.</text>
</comment>
<comment type="catalytic activity">
    <reaction evidence="1">
        <text>4 porphobilinogen + H2O = hydroxymethylbilane + 4 NH4(+)</text>
        <dbReference type="Rhea" id="RHEA:13185"/>
        <dbReference type="ChEBI" id="CHEBI:15377"/>
        <dbReference type="ChEBI" id="CHEBI:28938"/>
        <dbReference type="ChEBI" id="CHEBI:57845"/>
        <dbReference type="ChEBI" id="CHEBI:58126"/>
        <dbReference type="EC" id="2.5.1.61"/>
    </reaction>
</comment>
<comment type="cofactor">
    <cofactor evidence="1">
        <name>dipyrromethane</name>
        <dbReference type="ChEBI" id="CHEBI:60342"/>
    </cofactor>
    <text evidence="1">Binds 1 dipyrromethane group covalently.</text>
</comment>
<comment type="pathway">
    <text evidence="1">Porphyrin-containing compound metabolism; protoporphyrin-IX biosynthesis; coproporphyrinogen-III from 5-aminolevulinate: step 2/4.</text>
</comment>
<comment type="miscellaneous">
    <text evidence="1">The porphobilinogen subunits are added to the dipyrromethane group.</text>
</comment>
<comment type="similarity">
    <text evidence="1">Belongs to the HMBS family.</text>
</comment>
<name>HEM3_METAC</name>
<evidence type="ECO:0000255" key="1">
    <source>
        <dbReference type="HAMAP-Rule" id="MF_00260"/>
    </source>
</evidence>
<keyword id="KW-0627">Porphyrin biosynthesis</keyword>
<keyword id="KW-1185">Reference proteome</keyword>
<keyword id="KW-0808">Transferase</keyword>
<feature type="chain" id="PRO_0000143023" description="Probable porphobilinogen deaminase">
    <location>
        <begin position="1"/>
        <end position="317"/>
    </location>
</feature>
<feature type="modified residue" description="S-(dipyrrolylmethanemethyl)cysteine" evidence="1">
    <location>
        <position position="234"/>
    </location>
</feature>
<organism>
    <name type="scientific">Methanosarcina acetivorans (strain ATCC 35395 / DSM 2834 / JCM 12185 / C2A)</name>
    <dbReference type="NCBI Taxonomy" id="188937"/>
    <lineage>
        <taxon>Archaea</taxon>
        <taxon>Methanobacteriati</taxon>
        <taxon>Methanobacteriota</taxon>
        <taxon>Stenosarchaea group</taxon>
        <taxon>Methanomicrobia</taxon>
        <taxon>Methanosarcinales</taxon>
        <taxon>Methanosarcinaceae</taxon>
        <taxon>Methanosarcina</taxon>
    </lineage>
</organism>
<accession>Q8TT56</accession>